<organism>
    <name type="scientific">Neurospora crassa (strain ATCC 24698 / 74-OR23-1A / CBS 708.71 / DSM 1257 / FGSC 987)</name>
    <dbReference type="NCBI Taxonomy" id="367110"/>
    <lineage>
        <taxon>Eukaryota</taxon>
        <taxon>Fungi</taxon>
        <taxon>Dikarya</taxon>
        <taxon>Ascomycota</taxon>
        <taxon>Pezizomycotina</taxon>
        <taxon>Sordariomycetes</taxon>
        <taxon>Sordariomycetidae</taxon>
        <taxon>Sordariales</taxon>
        <taxon>Sordariaceae</taxon>
        <taxon>Neurospora</taxon>
    </lineage>
</organism>
<dbReference type="EMBL" id="CM002238">
    <property type="protein sequence ID" value="EAA26915.3"/>
    <property type="molecule type" value="Genomic_DNA"/>
</dbReference>
<dbReference type="RefSeq" id="XP_956151.3">
    <property type="nucleotide sequence ID" value="XM_951058.3"/>
</dbReference>
<dbReference type="SMR" id="Q7RWT1"/>
<dbReference type="FunCoup" id="Q7RWT1">
    <property type="interactions" value="1246"/>
</dbReference>
<dbReference type="STRING" id="367110.Q7RWT1"/>
<dbReference type="PaxDb" id="5141-EFNCRP00000000281"/>
<dbReference type="EnsemblFungi" id="EAA26915">
    <property type="protein sequence ID" value="EAA26915"/>
    <property type="gene ID" value="NCU00040"/>
</dbReference>
<dbReference type="GeneID" id="3872303"/>
<dbReference type="KEGG" id="ncr:NCU00040"/>
<dbReference type="VEuPathDB" id="FungiDB:NCU00040"/>
<dbReference type="HOGENOM" id="CLU_002096_2_1_1"/>
<dbReference type="InParanoid" id="Q7RWT1"/>
<dbReference type="OrthoDB" id="18884at2759"/>
<dbReference type="Proteomes" id="UP000001805">
    <property type="component" value="Chromosome 3, Linkage Group III"/>
</dbReference>
<dbReference type="GO" id="GO:0010494">
    <property type="term" value="C:cytoplasmic stress granule"/>
    <property type="evidence" value="ECO:0007669"/>
    <property type="project" value="EnsemblFungi"/>
</dbReference>
<dbReference type="GO" id="GO:0016282">
    <property type="term" value="C:eukaryotic 43S preinitiation complex"/>
    <property type="evidence" value="ECO:0007669"/>
    <property type="project" value="UniProtKB-UniRule"/>
</dbReference>
<dbReference type="GO" id="GO:0033290">
    <property type="term" value="C:eukaryotic 48S preinitiation complex"/>
    <property type="evidence" value="ECO:0007669"/>
    <property type="project" value="UniProtKB-UniRule"/>
</dbReference>
<dbReference type="GO" id="GO:0071540">
    <property type="term" value="C:eukaryotic translation initiation factor 3 complex, eIF3e"/>
    <property type="evidence" value="ECO:0000318"/>
    <property type="project" value="GO_Central"/>
</dbReference>
<dbReference type="GO" id="GO:0071541">
    <property type="term" value="C:eukaryotic translation initiation factor 3 complex, eIF3m"/>
    <property type="evidence" value="ECO:0000318"/>
    <property type="project" value="GO_Central"/>
</dbReference>
<dbReference type="GO" id="GO:0043614">
    <property type="term" value="C:multi-eIF complex"/>
    <property type="evidence" value="ECO:0000318"/>
    <property type="project" value="GO_Central"/>
</dbReference>
<dbReference type="GO" id="GO:0003729">
    <property type="term" value="F:mRNA binding"/>
    <property type="evidence" value="ECO:0000318"/>
    <property type="project" value="GO_Central"/>
</dbReference>
<dbReference type="GO" id="GO:0003743">
    <property type="term" value="F:translation initiation factor activity"/>
    <property type="evidence" value="ECO:0007669"/>
    <property type="project" value="UniProtKB-UniRule"/>
</dbReference>
<dbReference type="GO" id="GO:0001732">
    <property type="term" value="P:formation of cytoplasmic translation initiation complex"/>
    <property type="evidence" value="ECO:0000318"/>
    <property type="project" value="GO_Central"/>
</dbReference>
<dbReference type="GO" id="GO:0002188">
    <property type="term" value="P:translation reinitiation"/>
    <property type="evidence" value="ECO:0000318"/>
    <property type="project" value="GO_Central"/>
</dbReference>
<dbReference type="FunFam" id="1.25.40.860:FF:000003">
    <property type="entry name" value="Eukaryotic translation initiation factor 3 subunit A"/>
    <property type="match status" value="1"/>
</dbReference>
<dbReference type="FunFam" id="4.10.860.10:FF:000001">
    <property type="entry name" value="Eukaryotic translation initiation factor 3 subunit A"/>
    <property type="match status" value="1"/>
</dbReference>
<dbReference type="Gene3D" id="1.25.40.860">
    <property type="match status" value="2"/>
</dbReference>
<dbReference type="Gene3D" id="4.10.860.10">
    <property type="entry name" value="UVR domain"/>
    <property type="match status" value="1"/>
</dbReference>
<dbReference type="HAMAP" id="MF_03000">
    <property type="entry name" value="eIF3a"/>
    <property type="match status" value="1"/>
</dbReference>
<dbReference type="InterPro" id="IPR027512">
    <property type="entry name" value="EIF3A"/>
</dbReference>
<dbReference type="InterPro" id="IPR054711">
    <property type="entry name" value="eIF3a_PCI_TPR-like"/>
</dbReference>
<dbReference type="InterPro" id="IPR000717">
    <property type="entry name" value="PCI_dom"/>
</dbReference>
<dbReference type="PANTHER" id="PTHR14005:SF0">
    <property type="entry name" value="EUKARYOTIC TRANSLATION INITIATION FACTOR 3 SUBUNIT A"/>
    <property type="match status" value="1"/>
</dbReference>
<dbReference type="PANTHER" id="PTHR14005">
    <property type="entry name" value="EUKARYOTIC TRANSLATION INITIATION FACTOR 3, THETA SUBUNIT"/>
    <property type="match status" value="1"/>
</dbReference>
<dbReference type="Pfam" id="PF22591">
    <property type="entry name" value="eIF3a_PCI_TPR-like"/>
    <property type="match status" value="1"/>
</dbReference>
<dbReference type="Pfam" id="PF01399">
    <property type="entry name" value="PCI"/>
    <property type="match status" value="1"/>
</dbReference>
<dbReference type="SMART" id="SM00088">
    <property type="entry name" value="PINT"/>
    <property type="match status" value="1"/>
</dbReference>
<dbReference type="PROSITE" id="PS50250">
    <property type="entry name" value="PCI"/>
    <property type="match status" value="1"/>
</dbReference>
<accession>Q7RWT1</accession>
<proteinExistence type="inferred from homology"/>
<keyword id="KW-0175">Coiled coil</keyword>
<keyword id="KW-0963">Cytoplasm</keyword>
<keyword id="KW-0396">Initiation factor</keyword>
<keyword id="KW-0648">Protein biosynthesis</keyword>
<keyword id="KW-1185">Reference proteome</keyword>
<keyword id="KW-0694">RNA-binding</keyword>
<evidence type="ECO:0000255" key="1">
    <source>
        <dbReference type="HAMAP-Rule" id="MF_03000"/>
    </source>
</evidence>
<evidence type="ECO:0000255" key="2">
    <source>
        <dbReference type="PROSITE-ProRule" id="PRU01185"/>
    </source>
</evidence>
<evidence type="ECO:0000256" key="3">
    <source>
        <dbReference type="SAM" id="MobiDB-lite"/>
    </source>
</evidence>
<protein>
    <recommendedName>
        <fullName evidence="1">Eukaryotic translation initiation factor 3 subunit A</fullName>
        <shortName evidence="1">eIF3a</shortName>
    </recommendedName>
    <alternativeName>
        <fullName evidence="1">Eukaryotic translation initiation factor 3 110 kDa subunit homolog</fullName>
        <shortName evidence="1">eIF3 p110</shortName>
    </alternativeName>
    <alternativeName>
        <fullName evidence="1">Translation initiation factor eIF3, p110 subunit homolog</fullName>
    </alternativeName>
</protein>
<reference key="1">
    <citation type="journal article" date="2003" name="Nature">
        <title>The genome sequence of the filamentous fungus Neurospora crassa.</title>
        <authorList>
            <person name="Galagan J.E."/>
            <person name="Calvo S.E."/>
            <person name="Borkovich K.A."/>
            <person name="Selker E.U."/>
            <person name="Read N.D."/>
            <person name="Jaffe D.B."/>
            <person name="FitzHugh W."/>
            <person name="Ma L.-J."/>
            <person name="Smirnov S."/>
            <person name="Purcell S."/>
            <person name="Rehman B."/>
            <person name="Elkins T."/>
            <person name="Engels R."/>
            <person name="Wang S."/>
            <person name="Nielsen C.B."/>
            <person name="Butler J."/>
            <person name="Endrizzi M."/>
            <person name="Qui D."/>
            <person name="Ianakiev P."/>
            <person name="Bell-Pedersen D."/>
            <person name="Nelson M.A."/>
            <person name="Werner-Washburne M."/>
            <person name="Selitrennikoff C.P."/>
            <person name="Kinsey J.A."/>
            <person name="Braun E.L."/>
            <person name="Zelter A."/>
            <person name="Schulte U."/>
            <person name="Kothe G.O."/>
            <person name="Jedd G."/>
            <person name="Mewes H.-W."/>
            <person name="Staben C."/>
            <person name="Marcotte E."/>
            <person name="Greenberg D."/>
            <person name="Roy A."/>
            <person name="Foley K."/>
            <person name="Naylor J."/>
            <person name="Stange-Thomann N."/>
            <person name="Barrett R."/>
            <person name="Gnerre S."/>
            <person name="Kamal M."/>
            <person name="Kamvysselis M."/>
            <person name="Mauceli E.W."/>
            <person name="Bielke C."/>
            <person name="Rudd S."/>
            <person name="Frishman D."/>
            <person name="Krystofova S."/>
            <person name="Rasmussen C."/>
            <person name="Metzenberg R.L."/>
            <person name="Perkins D.D."/>
            <person name="Kroken S."/>
            <person name="Cogoni C."/>
            <person name="Macino G."/>
            <person name="Catcheside D.E.A."/>
            <person name="Li W."/>
            <person name="Pratt R.J."/>
            <person name="Osmani S.A."/>
            <person name="DeSouza C.P.C."/>
            <person name="Glass N.L."/>
            <person name="Orbach M.J."/>
            <person name="Berglund J.A."/>
            <person name="Voelker R."/>
            <person name="Yarden O."/>
            <person name="Plamann M."/>
            <person name="Seiler S."/>
            <person name="Dunlap J.C."/>
            <person name="Radford A."/>
            <person name="Aramayo R."/>
            <person name="Natvig D.O."/>
            <person name="Alex L.A."/>
            <person name="Mannhaupt G."/>
            <person name="Ebbole D.J."/>
            <person name="Freitag M."/>
            <person name="Paulsen I."/>
            <person name="Sachs M.S."/>
            <person name="Lander E.S."/>
            <person name="Nusbaum C."/>
            <person name="Birren B.W."/>
        </authorList>
    </citation>
    <scope>NUCLEOTIDE SEQUENCE [LARGE SCALE GENOMIC DNA]</scope>
    <source>
        <strain>ATCC 24698 / 74-OR23-1A / CBS 708.71 / DSM 1257 / FGSC 987</strain>
    </source>
</reference>
<feature type="chain" id="PRO_0000366367" description="Eukaryotic translation initiation factor 3 subunit A">
    <location>
        <begin position="1"/>
        <end position="1059"/>
    </location>
</feature>
<feature type="domain" description="PCI" evidence="2">
    <location>
        <begin position="337"/>
        <end position="521"/>
    </location>
</feature>
<feature type="region of interest" description="Disordered" evidence="3">
    <location>
        <begin position="794"/>
        <end position="1059"/>
    </location>
</feature>
<feature type="coiled-coil region" evidence="1">
    <location>
        <begin position="99"/>
        <end position="130"/>
    </location>
</feature>
<feature type="coiled-coil region" evidence="1">
    <location>
        <begin position="586"/>
        <end position="905"/>
    </location>
</feature>
<feature type="compositionally biased region" description="Basic and acidic residues" evidence="3">
    <location>
        <begin position="794"/>
        <end position="902"/>
    </location>
</feature>
<feature type="compositionally biased region" description="Low complexity" evidence="3">
    <location>
        <begin position="908"/>
        <end position="927"/>
    </location>
</feature>
<feature type="compositionally biased region" description="Low complexity" evidence="3">
    <location>
        <begin position="942"/>
        <end position="958"/>
    </location>
</feature>
<feature type="compositionally biased region" description="Low complexity" evidence="3">
    <location>
        <begin position="965"/>
        <end position="988"/>
    </location>
</feature>
<feature type="compositionally biased region" description="Low complexity" evidence="3">
    <location>
        <begin position="1005"/>
        <end position="1024"/>
    </location>
</feature>
<name>EIF3A_NEUCR</name>
<comment type="function">
    <text evidence="1">RNA-binding component of the eukaryotic translation initiation factor 3 (eIF-3) complex, which is involved in protein synthesis of a specialized repertoire of mRNAs and, together with other initiation factors, stimulates binding of mRNA and methionyl-tRNAi to the 40S ribosome. The eIF-3 complex specifically targets and initiates translation of a subset of mRNAs involved in cell proliferation.</text>
</comment>
<comment type="subunit">
    <text evidence="1">Component of the eukaryotic translation initiation factor 3 (eIF-3) complex.</text>
</comment>
<comment type="subcellular location">
    <subcellularLocation>
        <location evidence="1">Cytoplasm</location>
    </subcellularLocation>
</comment>
<comment type="similarity">
    <text evidence="1">Belongs to the eIF-3 subunit A family.</text>
</comment>
<gene>
    <name type="primary">eif3a</name>
    <name type="synonym">tif32</name>
    <name type="ORF">NCU00040</name>
    <name type="ORF">NCU20009</name>
</gene>
<sequence length="1059" mass="120243">MPPPPHQKPENVLKRAHELIGVNQAPAALTLLHEHITSKRSRNVPIASLEPVMLLLVELSVEQKKGKLAKDALYQYKNIAQNTNVATIELVLKKFIELAAEKVTAAQAKADEVQSSIEATTSNIDDLEASETPESILLATVSGEQSRDRTDRAIVTPWLKFLWEAYRTVLDILRNNARLEVLYQSTAMQAFDFCLKYTRKTEFRRLCELLRNHVQTAAKYSAQMHAINLNDPDTLQRHLETRFQQLNVAVELELWQEAFRSVEDIHTLLSLSKRPAKNVMMANYYEKLTRIFLVGENYLFHAAAWARYYNLLRQSAALIASGHSKKADNPACSDADLQRAATFVILSALSIPVISTSRSRGAMVDFDEARKNKNSRLTHLLGMAQAPTRAGLFRDALSKSLLRRAQPQIRDLYNILEVDFHPLSICQKISPILAEIGADAEMQKYILPLQQVILTRLFQQLSQVYETVDLEFVESLAQFPEPFQVTRGTIEKFIMNGNKKGDLAIRMDHATGVLSFDADVFSSAKAVHAGSSAGSAESETGSVQRLQSTPSQIVRSQLTRLAEALYTTCRYIDPSFNEARIKARDEALARAKAGAEKEHQEVLARKEIIQTRKDKASEAQAQKEKENARKKLLQEQALQQAEAARLAEEQKLREAKRLANEREQIKRKEVEALLKDMKLEELQGEDIETLDSNKIRMIKLQQLEREKNSVAEKLRITGKRLDHLERAFRKEEAKKLPEDYAKQRERDLAAYERTKAQTLKEAELKHKADVELKHRLTRLMPFYESFRSDLHERRRDEFEKRRRDAEREMEKQINARRKEAREKRIREKREREERERQLREAEERAAREKEEERKRLEARREELQRLKEEKEKEREKLREIAARQQQREEEAMARRKAEKEKLAATPSAYRPPAAAERTEAAAPPRIALAGNRPSWREREAAKAASGETAAPAPAAAEPVAERPRAAAPPAERTEAAAPPRLALAGNRPSWREREAAKAASGGGNAAAVPERSAPPLRAAAPQRAGSGRPENDRDVPPAEPLKASGAPGKYVPKWRREGA</sequence>